<gene>
    <name evidence="1" type="primary">folD1</name>
    <name type="ordered locus">MXAN_2226</name>
</gene>
<reference key="1">
    <citation type="journal article" date="2006" name="Proc. Natl. Acad. Sci. U.S.A.">
        <title>Evolution of sensory complexity recorded in a myxobacterial genome.</title>
        <authorList>
            <person name="Goldman B.S."/>
            <person name="Nierman W.C."/>
            <person name="Kaiser D."/>
            <person name="Slater S.C."/>
            <person name="Durkin A.S."/>
            <person name="Eisen J.A."/>
            <person name="Ronning C.M."/>
            <person name="Barbazuk W.B."/>
            <person name="Blanchard M."/>
            <person name="Field C."/>
            <person name="Halling C."/>
            <person name="Hinkle G."/>
            <person name="Iartchuk O."/>
            <person name="Kim H.S."/>
            <person name="Mackenzie C."/>
            <person name="Madupu R."/>
            <person name="Miller N."/>
            <person name="Shvartsbeyn A."/>
            <person name="Sullivan S.A."/>
            <person name="Vaudin M."/>
            <person name="Wiegand R."/>
            <person name="Kaplan H.B."/>
        </authorList>
    </citation>
    <scope>NUCLEOTIDE SEQUENCE [LARGE SCALE GENOMIC DNA]</scope>
    <source>
        <strain>DK1622</strain>
    </source>
</reference>
<accession>Q1DA76</accession>
<name>FOLD1_MYXXD</name>
<keyword id="KW-0028">Amino-acid biosynthesis</keyword>
<keyword id="KW-0368">Histidine biosynthesis</keyword>
<keyword id="KW-0378">Hydrolase</keyword>
<keyword id="KW-0486">Methionine biosynthesis</keyword>
<keyword id="KW-0511">Multifunctional enzyme</keyword>
<keyword id="KW-0521">NADP</keyword>
<keyword id="KW-0554">One-carbon metabolism</keyword>
<keyword id="KW-0560">Oxidoreductase</keyword>
<keyword id="KW-0658">Purine biosynthesis</keyword>
<keyword id="KW-1185">Reference proteome</keyword>
<comment type="function">
    <text evidence="1">Catalyzes the oxidation of 5,10-methylenetetrahydrofolate to 5,10-methenyltetrahydrofolate and then the hydrolysis of 5,10-methenyltetrahydrofolate to 10-formyltetrahydrofolate.</text>
</comment>
<comment type="catalytic activity">
    <reaction evidence="1">
        <text>(6R)-5,10-methylene-5,6,7,8-tetrahydrofolate + NADP(+) = (6R)-5,10-methenyltetrahydrofolate + NADPH</text>
        <dbReference type="Rhea" id="RHEA:22812"/>
        <dbReference type="ChEBI" id="CHEBI:15636"/>
        <dbReference type="ChEBI" id="CHEBI:57455"/>
        <dbReference type="ChEBI" id="CHEBI:57783"/>
        <dbReference type="ChEBI" id="CHEBI:58349"/>
        <dbReference type="EC" id="1.5.1.5"/>
    </reaction>
</comment>
<comment type="catalytic activity">
    <reaction evidence="1">
        <text>(6R)-5,10-methenyltetrahydrofolate + H2O = (6R)-10-formyltetrahydrofolate + H(+)</text>
        <dbReference type="Rhea" id="RHEA:23700"/>
        <dbReference type="ChEBI" id="CHEBI:15377"/>
        <dbReference type="ChEBI" id="CHEBI:15378"/>
        <dbReference type="ChEBI" id="CHEBI:57455"/>
        <dbReference type="ChEBI" id="CHEBI:195366"/>
        <dbReference type="EC" id="3.5.4.9"/>
    </reaction>
</comment>
<comment type="pathway">
    <text evidence="1">One-carbon metabolism; tetrahydrofolate interconversion.</text>
</comment>
<comment type="subunit">
    <text evidence="1">Homodimer.</text>
</comment>
<comment type="similarity">
    <text evidence="1">Belongs to the tetrahydrofolate dehydrogenase/cyclohydrolase family.</text>
</comment>
<dbReference type="EC" id="1.5.1.5" evidence="1"/>
<dbReference type="EC" id="3.5.4.9" evidence="1"/>
<dbReference type="EMBL" id="CP000113">
    <property type="protein sequence ID" value="ABF89655.1"/>
    <property type="molecule type" value="Genomic_DNA"/>
</dbReference>
<dbReference type="RefSeq" id="WP_011552302.1">
    <property type="nucleotide sequence ID" value="NC_008095.1"/>
</dbReference>
<dbReference type="SMR" id="Q1DA76"/>
<dbReference type="STRING" id="246197.MXAN_2226"/>
<dbReference type="EnsemblBacteria" id="ABF89655">
    <property type="protein sequence ID" value="ABF89655"/>
    <property type="gene ID" value="MXAN_2226"/>
</dbReference>
<dbReference type="GeneID" id="41359614"/>
<dbReference type="KEGG" id="mxa:MXAN_2226"/>
<dbReference type="eggNOG" id="COG0190">
    <property type="taxonomic scope" value="Bacteria"/>
</dbReference>
<dbReference type="HOGENOM" id="CLU_034045_2_1_7"/>
<dbReference type="OrthoDB" id="9803580at2"/>
<dbReference type="UniPathway" id="UPA00193"/>
<dbReference type="Proteomes" id="UP000002402">
    <property type="component" value="Chromosome"/>
</dbReference>
<dbReference type="GO" id="GO:0005829">
    <property type="term" value="C:cytosol"/>
    <property type="evidence" value="ECO:0007669"/>
    <property type="project" value="TreeGrafter"/>
</dbReference>
<dbReference type="GO" id="GO:0004477">
    <property type="term" value="F:methenyltetrahydrofolate cyclohydrolase activity"/>
    <property type="evidence" value="ECO:0007669"/>
    <property type="project" value="UniProtKB-UniRule"/>
</dbReference>
<dbReference type="GO" id="GO:0004488">
    <property type="term" value="F:methylenetetrahydrofolate dehydrogenase (NADP+) activity"/>
    <property type="evidence" value="ECO:0007669"/>
    <property type="project" value="UniProtKB-UniRule"/>
</dbReference>
<dbReference type="GO" id="GO:0000105">
    <property type="term" value="P:L-histidine biosynthetic process"/>
    <property type="evidence" value="ECO:0007669"/>
    <property type="project" value="UniProtKB-KW"/>
</dbReference>
<dbReference type="GO" id="GO:0009086">
    <property type="term" value="P:methionine biosynthetic process"/>
    <property type="evidence" value="ECO:0007669"/>
    <property type="project" value="UniProtKB-KW"/>
</dbReference>
<dbReference type="GO" id="GO:0006164">
    <property type="term" value="P:purine nucleotide biosynthetic process"/>
    <property type="evidence" value="ECO:0007669"/>
    <property type="project" value="UniProtKB-KW"/>
</dbReference>
<dbReference type="GO" id="GO:0035999">
    <property type="term" value="P:tetrahydrofolate interconversion"/>
    <property type="evidence" value="ECO:0007669"/>
    <property type="project" value="UniProtKB-UniRule"/>
</dbReference>
<dbReference type="CDD" id="cd01080">
    <property type="entry name" value="NAD_bind_m-THF_DH_Cyclohyd"/>
    <property type="match status" value="1"/>
</dbReference>
<dbReference type="FunFam" id="3.40.50.720:FF:000189">
    <property type="entry name" value="Bifunctional protein FolD"/>
    <property type="match status" value="1"/>
</dbReference>
<dbReference type="FunFam" id="3.40.50.10860:FF:000005">
    <property type="entry name" value="C-1-tetrahydrofolate synthase, cytoplasmic, putative"/>
    <property type="match status" value="1"/>
</dbReference>
<dbReference type="Gene3D" id="3.40.50.10860">
    <property type="entry name" value="Leucine Dehydrogenase, chain A, domain 1"/>
    <property type="match status" value="1"/>
</dbReference>
<dbReference type="Gene3D" id="3.40.50.720">
    <property type="entry name" value="NAD(P)-binding Rossmann-like Domain"/>
    <property type="match status" value="1"/>
</dbReference>
<dbReference type="HAMAP" id="MF_01576">
    <property type="entry name" value="THF_DHG_CYH"/>
    <property type="match status" value="1"/>
</dbReference>
<dbReference type="InterPro" id="IPR046346">
    <property type="entry name" value="Aminoacid_DH-like_N_sf"/>
</dbReference>
<dbReference type="InterPro" id="IPR036291">
    <property type="entry name" value="NAD(P)-bd_dom_sf"/>
</dbReference>
<dbReference type="InterPro" id="IPR000672">
    <property type="entry name" value="THF_DH/CycHdrlase"/>
</dbReference>
<dbReference type="InterPro" id="IPR020630">
    <property type="entry name" value="THF_DH/CycHdrlase_cat_dom"/>
</dbReference>
<dbReference type="InterPro" id="IPR020867">
    <property type="entry name" value="THF_DH/CycHdrlase_CS"/>
</dbReference>
<dbReference type="InterPro" id="IPR020631">
    <property type="entry name" value="THF_DH/CycHdrlase_NAD-bd_dom"/>
</dbReference>
<dbReference type="NCBIfam" id="NF010783">
    <property type="entry name" value="PRK14186.1"/>
    <property type="match status" value="1"/>
</dbReference>
<dbReference type="PANTHER" id="PTHR48099:SF5">
    <property type="entry name" value="C-1-TETRAHYDROFOLATE SYNTHASE, CYTOPLASMIC"/>
    <property type="match status" value="1"/>
</dbReference>
<dbReference type="PANTHER" id="PTHR48099">
    <property type="entry name" value="C-1-TETRAHYDROFOLATE SYNTHASE, CYTOPLASMIC-RELATED"/>
    <property type="match status" value="1"/>
</dbReference>
<dbReference type="Pfam" id="PF00763">
    <property type="entry name" value="THF_DHG_CYH"/>
    <property type="match status" value="1"/>
</dbReference>
<dbReference type="Pfam" id="PF02882">
    <property type="entry name" value="THF_DHG_CYH_C"/>
    <property type="match status" value="1"/>
</dbReference>
<dbReference type="PRINTS" id="PR00085">
    <property type="entry name" value="THFDHDRGNASE"/>
</dbReference>
<dbReference type="SUPFAM" id="SSF53223">
    <property type="entry name" value="Aminoacid dehydrogenase-like, N-terminal domain"/>
    <property type="match status" value="1"/>
</dbReference>
<dbReference type="SUPFAM" id="SSF51735">
    <property type="entry name" value="NAD(P)-binding Rossmann-fold domains"/>
    <property type="match status" value="1"/>
</dbReference>
<dbReference type="PROSITE" id="PS00767">
    <property type="entry name" value="THF_DHG_CYH_2"/>
    <property type="match status" value="1"/>
</dbReference>
<organism>
    <name type="scientific">Myxococcus xanthus (strain DK1622)</name>
    <dbReference type="NCBI Taxonomy" id="246197"/>
    <lineage>
        <taxon>Bacteria</taxon>
        <taxon>Pseudomonadati</taxon>
        <taxon>Myxococcota</taxon>
        <taxon>Myxococcia</taxon>
        <taxon>Myxococcales</taxon>
        <taxon>Cystobacterineae</taxon>
        <taxon>Myxococcaceae</taxon>
        <taxon>Myxococcus</taxon>
    </lineage>
</organism>
<protein>
    <recommendedName>
        <fullName evidence="1">Bifunctional protein FolD 1</fullName>
    </recommendedName>
    <domain>
        <recommendedName>
            <fullName evidence="1">Methylenetetrahydrofolate dehydrogenase</fullName>
            <ecNumber evidence="1">1.5.1.5</ecNumber>
        </recommendedName>
    </domain>
    <domain>
        <recommendedName>
            <fullName evidence="1">Methenyltetrahydrofolate cyclohydrolase</fullName>
            <ecNumber evidence="1">3.5.4.9</ecNumber>
        </recommendedName>
    </domain>
</protein>
<sequence length="292" mass="30827">MARTLDGTEISRVMRAEMAQDVAALQAAGVTPGLSVVLVGNNPASQAYVASKTRACESLGMRGQTLTLPEDVSKEALFAVIDRLNADPSVHGILVQLPLPAHLPYKAVLEHIHPAKDVDGFHPVNAGLAFVGDPRAFVPCTPAGIMEMLRREDIPTRGKHVVIVGRSLIVSKPLASLLMAPGPDATVTITHRHTPDLASFTRQADILIVAVGKQNLITADMVKPGVVVIDVGQNRVSDASSPRGYRMVGDVDFDAIQPIASAITPVPGGVGPMTITMLLANTLQAARQTQAR</sequence>
<evidence type="ECO:0000255" key="1">
    <source>
        <dbReference type="HAMAP-Rule" id="MF_01576"/>
    </source>
</evidence>
<proteinExistence type="inferred from homology"/>
<feature type="chain" id="PRO_0000268412" description="Bifunctional protein FolD 1">
    <location>
        <begin position="1"/>
        <end position="292"/>
    </location>
</feature>
<feature type="binding site" evidence="1">
    <location>
        <begin position="165"/>
        <end position="167"/>
    </location>
    <ligand>
        <name>NADP(+)</name>
        <dbReference type="ChEBI" id="CHEBI:58349"/>
    </ligand>
</feature>